<feature type="chain" id="PRO_1000063627" description="3-isopropylmalate dehydratase large subunit">
    <location>
        <begin position="1"/>
        <end position="472"/>
    </location>
</feature>
<feature type="binding site" evidence="1">
    <location>
        <position position="347"/>
    </location>
    <ligand>
        <name>[4Fe-4S] cluster</name>
        <dbReference type="ChEBI" id="CHEBI:49883"/>
    </ligand>
</feature>
<feature type="binding site" evidence="1">
    <location>
        <position position="407"/>
    </location>
    <ligand>
        <name>[4Fe-4S] cluster</name>
        <dbReference type="ChEBI" id="CHEBI:49883"/>
    </ligand>
</feature>
<feature type="binding site" evidence="1">
    <location>
        <position position="410"/>
    </location>
    <ligand>
        <name>[4Fe-4S] cluster</name>
        <dbReference type="ChEBI" id="CHEBI:49883"/>
    </ligand>
</feature>
<name>LEUC_SYNS9</name>
<dbReference type="EC" id="4.2.1.33" evidence="1"/>
<dbReference type="EMBL" id="CP000097">
    <property type="protein sequence ID" value="ABB27046.1"/>
    <property type="molecule type" value="Genomic_DNA"/>
</dbReference>
<dbReference type="RefSeq" id="WP_011360830.1">
    <property type="nucleotide sequence ID" value="NC_007513.1"/>
</dbReference>
<dbReference type="SMR" id="Q3AW21"/>
<dbReference type="STRING" id="316279.Syncc9902_2088"/>
<dbReference type="KEGG" id="sye:Syncc9902_2088"/>
<dbReference type="eggNOG" id="COG0065">
    <property type="taxonomic scope" value="Bacteria"/>
</dbReference>
<dbReference type="HOGENOM" id="CLU_006714_3_4_3"/>
<dbReference type="OrthoDB" id="9802769at2"/>
<dbReference type="UniPathway" id="UPA00048">
    <property type="reaction ID" value="UER00071"/>
</dbReference>
<dbReference type="Proteomes" id="UP000002712">
    <property type="component" value="Chromosome"/>
</dbReference>
<dbReference type="GO" id="GO:0003861">
    <property type="term" value="F:3-isopropylmalate dehydratase activity"/>
    <property type="evidence" value="ECO:0007669"/>
    <property type="project" value="UniProtKB-UniRule"/>
</dbReference>
<dbReference type="GO" id="GO:0051539">
    <property type="term" value="F:4 iron, 4 sulfur cluster binding"/>
    <property type="evidence" value="ECO:0007669"/>
    <property type="project" value="UniProtKB-KW"/>
</dbReference>
<dbReference type="GO" id="GO:0046872">
    <property type="term" value="F:metal ion binding"/>
    <property type="evidence" value="ECO:0007669"/>
    <property type="project" value="UniProtKB-KW"/>
</dbReference>
<dbReference type="GO" id="GO:0009098">
    <property type="term" value="P:L-leucine biosynthetic process"/>
    <property type="evidence" value="ECO:0007669"/>
    <property type="project" value="UniProtKB-UniRule"/>
</dbReference>
<dbReference type="CDD" id="cd01583">
    <property type="entry name" value="IPMI"/>
    <property type="match status" value="1"/>
</dbReference>
<dbReference type="Gene3D" id="3.30.499.10">
    <property type="entry name" value="Aconitase, domain 3"/>
    <property type="match status" value="2"/>
</dbReference>
<dbReference type="HAMAP" id="MF_01026">
    <property type="entry name" value="LeuC_type1"/>
    <property type="match status" value="1"/>
</dbReference>
<dbReference type="InterPro" id="IPR004430">
    <property type="entry name" value="3-IsopropMal_deHydase_lsu"/>
</dbReference>
<dbReference type="InterPro" id="IPR015931">
    <property type="entry name" value="Acnase/IPM_dHydase_lsu_aba_1/3"/>
</dbReference>
<dbReference type="InterPro" id="IPR001030">
    <property type="entry name" value="Acoase/IPM_deHydtase_lsu_aba"/>
</dbReference>
<dbReference type="InterPro" id="IPR018136">
    <property type="entry name" value="Aconitase_4Fe-4S_BS"/>
</dbReference>
<dbReference type="InterPro" id="IPR036008">
    <property type="entry name" value="Aconitase_4Fe-4S_dom"/>
</dbReference>
<dbReference type="InterPro" id="IPR050067">
    <property type="entry name" value="IPM_dehydratase_rel_enz"/>
</dbReference>
<dbReference type="InterPro" id="IPR033941">
    <property type="entry name" value="IPMI_cat"/>
</dbReference>
<dbReference type="NCBIfam" id="TIGR00170">
    <property type="entry name" value="leuC"/>
    <property type="match status" value="1"/>
</dbReference>
<dbReference type="NCBIfam" id="NF004016">
    <property type="entry name" value="PRK05478.1"/>
    <property type="match status" value="1"/>
</dbReference>
<dbReference type="NCBIfam" id="NF009116">
    <property type="entry name" value="PRK12466.1"/>
    <property type="match status" value="1"/>
</dbReference>
<dbReference type="PANTHER" id="PTHR43822:SF9">
    <property type="entry name" value="3-ISOPROPYLMALATE DEHYDRATASE"/>
    <property type="match status" value="1"/>
</dbReference>
<dbReference type="PANTHER" id="PTHR43822">
    <property type="entry name" value="HOMOACONITASE, MITOCHONDRIAL-RELATED"/>
    <property type="match status" value="1"/>
</dbReference>
<dbReference type="Pfam" id="PF00330">
    <property type="entry name" value="Aconitase"/>
    <property type="match status" value="1"/>
</dbReference>
<dbReference type="PRINTS" id="PR00415">
    <property type="entry name" value="ACONITASE"/>
</dbReference>
<dbReference type="SUPFAM" id="SSF53732">
    <property type="entry name" value="Aconitase iron-sulfur domain"/>
    <property type="match status" value="1"/>
</dbReference>
<dbReference type="PROSITE" id="PS00450">
    <property type="entry name" value="ACONITASE_1"/>
    <property type="match status" value="1"/>
</dbReference>
<dbReference type="PROSITE" id="PS01244">
    <property type="entry name" value="ACONITASE_2"/>
    <property type="match status" value="1"/>
</dbReference>
<protein>
    <recommendedName>
        <fullName evidence="1">3-isopropylmalate dehydratase large subunit</fullName>
        <ecNumber evidence="1">4.2.1.33</ecNumber>
    </recommendedName>
    <alternativeName>
        <fullName evidence="1">Alpha-IPM isomerase</fullName>
        <shortName evidence="1">IPMI</shortName>
    </alternativeName>
    <alternativeName>
        <fullName evidence="1">Isopropylmalate isomerase</fullName>
    </alternativeName>
</protein>
<reference key="1">
    <citation type="submission" date="2005-08" db="EMBL/GenBank/DDBJ databases">
        <title>Complete sequence of Synechococcus sp. CC9902.</title>
        <authorList>
            <person name="Copeland A."/>
            <person name="Lucas S."/>
            <person name="Lapidus A."/>
            <person name="Barry K."/>
            <person name="Detter J.C."/>
            <person name="Glavina T."/>
            <person name="Hammon N."/>
            <person name="Israni S."/>
            <person name="Pitluck S."/>
            <person name="Martinez M."/>
            <person name="Schmutz J."/>
            <person name="Larimer F."/>
            <person name="Land M."/>
            <person name="Kyrpides N."/>
            <person name="Ivanova N."/>
            <person name="Richardson P."/>
        </authorList>
    </citation>
    <scope>NUCLEOTIDE SEQUENCE [LARGE SCALE GENOMIC DNA]</scope>
    <source>
        <strain>CC9902</strain>
    </source>
</reference>
<accession>Q3AW21</accession>
<sequence length="472" mass="49613">MSSGTLYDKVWDLHRVADLPGGSTQLFVGLHLIHEVTSPQAFSGLRDKGLKVACPERTVATVDHIVPTTSQARPFADPLAEEMLSTLERNCAESGIVLNGIGSGRQGIVHVIAPELGLSQPGMTVACGDSHTSTHGAFGAIAFGIGTSQVRDVLASQSLAMNKLKVRRILVNGQLSAGVSAKDLVLHVIRTLGVKGGVGYAYEFAGSAIEALSMEERMTLCNMAIEGGARCGYVNPDQTTFDYLKGRPHAPSGAAWDAAVDWWLSLATDAAAEVDDEVVFDATVIAPTVTWGITPGQGLGIDECVPSLSMLDPGERPIAKEAYRYMDLDPGTPIAGVPIDVCFIGSCTNGRLSDLRAAAAVARGRQVAKGVKAFVVPGSEQVARAAEAEGLDQVFSEAGFEWREPGCSMCLAMNPDRLEGRQISASSSNRNFKGRQGSASGRTLLMSPAMVVAAAVHGRVTDVRTLALHSAS</sequence>
<keyword id="KW-0004">4Fe-4S</keyword>
<keyword id="KW-0028">Amino-acid biosynthesis</keyword>
<keyword id="KW-0100">Branched-chain amino acid biosynthesis</keyword>
<keyword id="KW-0408">Iron</keyword>
<keyword id="KW-0411">Iron-sulfur</keyword>
<keyword id="KW-0432">Leucine biosynthesis</keyword>
<keyword id="KW-0456">Lyase</keyword>
<keyword id="KW-0479">Metal-binding</keyword>
<keyword id="KW-1185">Reference proteome</keyword>
<comment type="function">
    <text evidence="1">Catalyzes the isomerization between 2-isopropylmalate and 3-isopropylmalate, via the formation of 2-isopropylmaleate.</text>
</comment>
<comment type="catalytic activity">
    <reaction evidence="1">
        <text>(2R,3S)-3-isopropylmalate = (2S)-2-isopropylmalate</text>
        <dbReference type="Rhea" id="RHEA:32287"/>
        <dbReference type="ChEBI" id="CHEBI:1178"/>
        <dbReference type="ChEBI" id="CHEBI:35121"/>
        <dbReference type="EC" id="4.2.1.33"/>
    </reaction>
</comment>
<comment type="cofactor">
    <cofactor evidence="1">
        <name>[4Fe-4S] cluster</name>
        <dbReference type="ChEBI" id="CHEBI:49883"/>
    </cofactor>
    <text evidence="1">Binds 1 [4Fe-4S] cluster per subunit.</text>
</comment>
<comment type="pathway">
    <text evidence="1">Amino-acid biosynthesis; L-leucine biosynthesis; L-leucine from 3-methyl-2-oxobutanoate: step 2/4.</text>
</comment>
<comment type="subunit">
    <text evidence="1">Heterodimer of LeuC and LeuD.</text>
</comment>
<comment type="similarity">
    <text evidence="1">Belongs to the aconitase/IPM isomerase family. LeuC type 1 subfamily.</text>
</comment>
<proteinExistence type="inferred from homology"/>
<organism>
    <name type="scientific">Synechococcus sp. (strain CC9902)</name>
    <dbReference type="NCBI Taxonomy" id="316279"/>
    <lineage>
        <taxon>Bacteria</taxon>
        <taxon>Bacillati</taxon>
        <taxon>Cyanobacteriota</taxon>
        <taxon>Cyanophyceae</taxon>
        <taxon>Synechococcales</taxon>
        <taxon>Synechococcaceae</taxon>
        <taxon>Synechococcus</taxon>
    </lineage>
</organism>
<gene>
    <name evidence="1" type="primary">leuC</name>
    <name type="ordered locus">Syncc9902_2088</name>
</gene>
<evidence type="ECO:0000255" key="1">
    <source>
        <dbReference type="HAMAP-Rule" id="MF_01026"/>
    </source>
</evidence>